<organism>
    <name type="scientific">Psychromonas ingrahamii (strain DSM 17664 / CCUG 51855 / 37)</name>
    <dbReference type="NCBI Taxonomy" id="357804"/>
    <lineage>
        <taxon>Bacteria</taxon>
        <taxon>Pseudomonadati</taxon>
        <taxon>Pseudomonadota</taxon>
        <taxon>Gammaproteobacteria</taxon>
        <taxon>Alteromonadales</taxon>
        <taxon>Psychromonadaceae</taxon>
        <taxon>Psychromonas</taxon>
    </lineage>
</organism>
<gene>
    <name evidence="1" type="primary">glmU</name>
    <name type="ordered locus">Ping_3204</name>
</gene>
<proteinExistence type="inferred from homology"/>
<name>GLMU_PSYIN</name>
<evidence type="ECO:0000255" key="1">
    <source>
        <dbReference type="HAMAP-Rule" id="MF_01631"/>
    </source>
</evidence>
<dbReference type="EC" id="2.7.7.23" evidence="1"/>
<dbReference type="EC" id="2.3.1.157" evidence="1"/>
<dbReference type="EMBL" id="CP000510">
    <property type="protein sequence ID" value="ABM04891.1"/>
    <property type="molecule type" value="Genomic_DNA"/>
</dbReference>
<dbReference type="RefSeq" id="WP_011771443.1">
    <property type="nucleotide sequence ID" value="NC_008709.1"/>
</dbReference>
<dbReference type="SMR" id="A1SZH6"/>
<dbReference type="STRING" id="357804.Ping_3204"/>
<dbReference type="KEGG" id="pin:Ping_3204"/>
<dbReference type="eggNOG" id="COG1207">
    <property type="taxonomic scope" value="Bacteria"/>
</dbReference>
<dbReference type="HOGENOM" id="CLU_029499_15_2_6"/>
<dbReference type="OrthoDB" id="9775031at2"/>
<dbReference type="UniPathway" id="UPA00113">
    <property type="reaction ID" value="UER00532"/>
</dbReference>
<dbReference type="UniPathway" id="UPA00113">
    <property type="reaction ID" value="UER00533"/>
</dbReference>
<dbReference type="UniPathway" id="UPA00973"/>
<dbReference type="Proteomes" id="UP000000639">
    <property type="component" value="Chromosome"/>
</dbReference>
<dbReference type="GO" id="GO:0005737">
    <property type="term" value="C:cytoplasm"/>
    <property type="evidence" value="ECO:0007669"/>
    <property type="project" value="UniProtKB-SubCell"/>
</dbReference>
<dbReference type="GO" id="GO:0016020">
    <property type="term" value="C:membrane"/>
    <property type="evidence" value="ECO:0007669"/>
    <property type="project" value="GOC"/>
</dbReference>
<dbReference type="GO" id="GO:0019134">
    <property type="term" value="F:glucosamine-1-phosphate N-acetyltransferase activity"/>
    <property type="evidence" value="ECO:0007669"/>
    <property type="project" value="UniProtKB-UniRule"/>
</dbReference>
<dbReference type="GO" id="GO:0000287">
    <property type="term" value="F:magnesium ion binding"/>
    <property type="evidence" value="ECO:0007669"/>
    <property type="project" value="UniProtKB-UniRule"/>
</dbReference>
<dbReference type="GO" id="GO:0003977">
    <property type="term" value="F:UDP-N-acetylglucosamine diphosphorylase activity"/>
    <property type="evidence" value="ECO:0007669"/>
    <property type="project" value="UniProtKB-UniRule"/>
</dbReference>
<dbReference type="GO" id="GO:0000902">
    <property type="term" value="P:cell morphogenesis"/>
    <property type="evidence" value="ECO:0007669"/>
    <property type="project" value="UniProtKB-UniRule"/>
</dbReference>
<dbReference type="GO" id="GO:0071555">
    <property type="term" value="P:cell wall organization"/>
    <property type="evidence" value="ECO:0007669"/>
    <property type="project" value="UniProtKB-KW"/>
</dbReference>
<dbReference type="GO" id="GO:0009245">
    <property type="term" value="P:lipid A biosynthetic process"/>
    <property type="evidence" value="ECO:0007669"/>
    <property type="project" value="UniProtKB-UniRule"/>
</dbReference>
<dbReference type="GO" id="GO:0009252">
    <property type="term" value="P:peptidoglycan biosynthetic process"/>
    <property type="evidence" value="ECO:0007669"/>
    <property type="project" value="UniProtKB-UniRule"/>
</dbReference>
<dbReference type="GO" id="GO:0008360">
    <property type="term" value="P:regulation of cell shape"/>
    <property type="evidence" value="ECO:0007669"/>
    <property type="project" value="UniProtKB-KW"/>
</dbReference>
<dbReference type="GO" id="GO:0006048">
    <property type="term" value="P:UDP-N-acetylglucosamine biosynthetic process"/>
    <property type="evidence" value="ECO:0007669"/>
    <property type="project" value="UniProtKB-UniPathway"/>
</dbReference>
<dbReference type="CDD" id="cd02540">
    <property type="entry name" value="GT2_GlmU_N_bac"/>
    <property type="match status" value="1"/>
</dbReference>
<dbReference type="CDD" id="cd03353">
    <property type="entry name" value="LbH_GlmU_C"/>
    <property type="match status" value="1"/>
</dbReference>
<dbReference type="FunFam" id="3.90.550.10:FF:000006">
    <property type="entry name" value="Bifunctional protein GlmU"/>
    <property type="match status" value="1"/>
</dbReference>
<dbReference type="Gene3D" id="2.160.10.10">
    <property type="entry name" value="Hexapeptide repeat proteins"/>
    <property type="match status" value="1"/>
</dbReference>
<dbReference type="Gene3D" id="3.90.550.10">
    <property type="entry name" value="Spore Coat Polysaccharide Biosynthesis Protein SpsA, Chain A"/>
    <property type="match status" value="1"/>
</dbReference>
<dbReference type="HAMAP" id="MF_01631">
    <property type="entry name" value="GlmU"/>
    <property type="match status" value="1"/>
</dbReference>
<dbReference type="InterPro" id="IPR005882">
    <property type="entry name" value="Bifunctional_GlmU"/>
</dbReference>
<dbReference type="InterPro" id="IPR050065">
    <property type="entry name" value="GlmU-like"/>
</dbReference>
<dbReference type="InterPro" id="IPR038009">
    <property type="entry name" value="GlmU_C_LbH"/>
</dbReference>
<dbReference type="InterPro" id="IPR001451">
    <property type="entry name" value="Hexapep"/>
</dbReference>
<dbReference type="InterPro" id="IPR025877">
    <property type="entry name" value="MobA-like_NTP_Trfase"/>
</dbReference>
<dbReference type="InterPro" id="IPR029044">
    <property type="entry name" value="Nucleotide-diphossugar_trans"/>
</dbReference>
<dbReference type="InterPro" id="IPR011004">
    <property type="entry name" value="Trimer_LpxA-like_sf"/>
</dbReference>
<dbReference type="NCBIfam" id="TIGR01173">
    <property type="entry name" value="glmU"/>
    <property type="match status" value="1"/>
</dbReference>
<dbReference type="NCBIfam" id="NF006986">
    <property type="entry name" value="PRK09451.1"/>
    <property type="match status" value="1"/>
</dbReference>
<dbReference type="PANTHER" id="PTHR43584:SF3">
    <property type="entry name" value="BIFUNCTIONAL PROTEIN GLMU"/>
    <property type="match status" value="1"/>
</dbReference>
<dbReference type="PANTHER" id="PTHR43584">
    <property type="entry name" value="NUCLEOTIDYL TRANSFERASE"/>
    <property type="match status" value="1"/>
</dbReference>
<dbReference type="Pfam" id="PF00132">
    <property type="entry name" value="Hexapep"/>
    <property type="match status" value="1"/>
</dbReference>
<dbReference type="Pfam" id="PF12804">
    <property type="entry name" value="NTP_transf_3"/>
    <property type="match status" value="1"/>
</dbReference>
<dbReference type="SUPFAM" id="SSF53448">
    <property type="entry name" value="Nucleotide-diphospho-sugar transferases"/>
    <property type="match status" value="1"/>
</dbReference>
<dbReference type="SUPFAM" id="SSF51161">
    <property type="entry name" value="Trimeric LpxA-like enzymes"/>
    <property type="match status" value="1"/>
</dbReference>
<accession>A1SZH6</accession>
<comment type="function">
    <text evidence="1">Catalyzes the last two sequential reactions in the de novo biosynthetic pathway for UDP-N-acetylglucosamine (UDP-GlcNAc). The C-terminal domain catalyzes the transfer of acetyl group from acetyl coenzyme A to glucosamine-1-phosphate (GlcN-1-P) to produce N-acetylglucosamine-1-phosphate (GlcNAc-1-P), which is converted into UDP-GlcNAc by the transfer of uridine 5-monophosphate (from uridine 5-triphosphate), a reaction catalyzed by the N-terminal domain.</text>
</comment>
<comment type="catalytic activity">
    <reaction evidence="1">
        <text>alpha-D-glucosamine 1-phosphate + acetyl-CoA = N-acetyl-alpha-D-glucosamine 1-phosphate + CoA + H(+)</text>
        <dbReference type="Rhea" id="RHEA:13725"/>
        <dbReference type="ChEBI" id="CHEBI:15378"/>
        <dbReference type="ChEBI" id="CHEBI:57287"/>
        <dbReference type="ChEBI" id="CHEBI:57288"/>
        <dbReference type="ChEBI" id="CHEBI:57776"/>
        <dbReference type="ChEBI" id="CHEBI:58516"/>
        <dbReference type="EC" id="2.3.1.157"/>
    </reaction>
</comment>
<comment type="catalytic activity">
    <reaction evidence="1">
        <text>N-acetyl-alpha-D-glucosamine 1-phosphate + UTP + H(+) = UDP-N-acetyl-alpha-D-glucosamine + diphosphate</text>
        <dbReference type="Rhea" id="RHEA:13509"/>
        <dbReference type="ChEBI" id="CHEBI:15378"/>
        <dbReference type="ChEBI" id="CHEBI:33019"/>
        <dbReference type="ChEBI" id="CHEBI:46398"/>
        <dbReference type="ChEBI" id="CHEBI:57705"/>
        <dbReference type="ChEBI" id="CHEBI:57776"/>
        <dbReference type="EC" id="2.7.7.23"/>
    </reaction>
</comment>
<comment type="cofactor">
    <cofactor evidence="1">
        <name>Mg(2+)</name>
        <dbReference type="ChEBI" id="CHEBI:18420"/>
    </cofactor>
    <text evidence="1">Binds 1 Mg(2+) ion per subunit.</text>
</comment>
<comment type="pathway">
    <text evidence="1">Nucleotide-sugar biosynthesis; UDP-N-acetyl-alpha-D-glucosamine biosynthesis; N-acetyl-alpha-D-glucosamine 1-phosphate from alpha-D-glucosamine 6-phosphate (route II): step 2/2.</text>
</comment>
<comment type="pathway">
    <text evidence="1">Nucleotide-sugar biosynthesis; UDP-N-acetyl-alpha-D-glucosamine biosynthesis; UDP-N-acetyl-alpha-D-glucosamine from N-acetyl-alpha-D-glucosamine 1-phosphate: step 1/1.</text>
</comment>
<comment type="pathway">
    <text evidence="1">Bacterial outer membrane biogenesis; LPS lipid A biosynthesis.</text>
</comment>
<comment type="subunit">
    <text evidence="1">Homotrimer.</text>
</comment>
<comment type="subcellular location">
    <subcellularLocation>
        <location evidence="1">Cytoplasm</location>
    </subcellularLocation>
</comment>
<comment type="similarity">
    <text evidence="1">In the N-terminal section; belongs to the N-acetylglucosamine-1-phosphate uridyltransferase family.</text>
</comment>
<comment type="similarity">
    <text evidence="1">In the C-terminal section; belongs to the transferase hexapeptide repeat family.</text>
</comment>
<feature type="chain" id="PRO_1000056190" description="Bifunctional protein GlmU">
    <location>
        <begin position="1"/>
        <end position="452"/>
    </location>
</feature>
<feature type="region of interest" description="Pyrophosphorylase" evidence="1">
    <location>
        <begin position="1"/>
        <end position="226"/>
    </location>
</feature>
<feature type="region of interest" description="Linker" evidence="1">
    <location>
        <begin position="227"/>
        <end position="247"/>
    </location>
</feature>
<feature type="region of interest" description="N-acetyltransferase" evidence="1">
    <location>
        <begin position="248"/>
        <end position="452"/>
    </location>
</feature>
<feature type="active site" description="Proton acceptor" evidence="1">
    <location>
        <position position="360"/>
    </location>
</feature>
<feature type="binding site" evidence="1">
    <location>
        <begin position="8"/>
        <end position="11"/>
    </location>
    <ligand>
        <name>UDP-N-acetyl-alpha-D-glucosamine</name>
        <dbReference type="ChEBI" id="CHEBI:57705"/>
    </ligand>
</feature>
<feature type="binding site" evidence="1">
    <location>
        <position position="22"/>
    </location>
    <ligand>
        <name>UDP-N-acetyl-alpha-D-glucosamine</name>
        <dbReference type="ChEBI" id="CHEBI:57705"/>
    </ligand>
</feature>
<feature type="binding site" evidence="1">
    <location>
        <position position="73"/>
    </location>
    <ligand>
        <name>UDP-N-acetyl-alpha-D-glucosamine</name>
        <dbReference type="ChEBI" id="CHEBI:57705"/>
    </ligand>
</feature>
<feature type="binding site" evidence="1">
    <location>
        <begin position="78"/>
        <end position="79"/>
    </location>
    <ligand>
        <name>UDP-N-acetyl-alpha-D-glucosamine</name>
        <dbReference type="ChEBI" id="CHEBI:57705"/>
    </ligand>
</feature>
<feature type="binding site" evidence="1">
    <location>
        <begin position="100"/>
        <end position="102"/>
    </location>
    <ligand>
        <name>UDP-N-acetyl-alpha-D-glucosamine</name>
        <dbReference type="ChEBI" id="CHEBI:57705"/>
    </ligand>
</feature>
<feature type="binding site" evidence="1">
    <location>
        <position position="102"/>
    </location>
    <ligand>
        <name>Mg(2+)</name>
        <dbReference type="ChEBI" id="CHEBI:18420"/>
    </ligand>
</feature>
<feature type="binding site" evidence="1">
    <location>
        <position position="137"/>
    </location>
    <ligand>
        <name>UDP-N-acetyl-alpha-D-glucosamine</name>
        <dbReference type="ChEBI" id="CHEBI:57705"/>
    </ligand>
</feature>
<feature type="binding site" evidence="1">
    <location>
        <position position="151"/>
    </location>
    <ligand>
        <name>UDP-N-acetyl-alpha-D-glucosamine</name>
        <dbReference type="ChEBI" id="CHEBI:57705"/>
    </ligand>
</feature>
<feature type="binding site" evidence="1">
    <location>
        <position position="166"/>
    </location>
    <ligand>
        <name>UDP-N-acetyl-alpha-D-glucosamine</name>
        <dbReference type="ChEBI" id="CHEBI:57705"/>
    </ligand>
</feature>
<feature type="binding site" evidence="1">
    <location>
        <position position="224"/>
    </location>
    <ligand>
        <name>Mg(2+)</name>
        <dbReference type="ChEBI" id="CHEBI:18420"/>
    </ligand>
</feature>
<feature type="binding site" evidence="1">
    <location>
        <position position="224"/>
    </location>
    <ligand>
        <name>UDP-N-acetyl-alpha-D-glucosamine</name>
        <dbReference type="ChEBI" id="CHEBI:57705"/>
    </ligand>
</feature>
<feature type="binding site" evidence="1">
    <location>
        <position position="330"/>
    </location>
    <ligand>
        <name>UDP-N-acetyl-alpha-D-glucosamine</name>
        <dbReference type="ChEBI" id="CHEBI:57705"/>
    </ligand>
</feature>
<feature type="binding site" evidence="1">
    <location>
        <position position="348"/>
    </location>
    <ligand>
        <name>UDP-N-acetyl-alpha-D-glucosamine</name>
        <dbReference type="ChEBI" id="CHEBI:57705"/>
    </ligand>
</feature>
<feature type="binding site" evidence="1">
    <location>
        <position position="363"/>
    </location>
    <ligand>
        <name>UDP-N-acetyl-alpha-D-glucosamine</name>
        <dbReference type="ChEBI" id="CHEBI:57705"/>
    </ligand>
</feature>
<feature type="binding site" evidence="1">
    <location>
        <position position="374"/>
    </location>
    <ligand>
        <name>UDP-N-acetyl-alpha-D-glucosamine</name>
        <dbReference type="ChEBI" id="CHEBI:57705"/>
    </ligand>
</feature>
<feature type="binding site" evidence="1">
    <location>
        <position position="377"/>
    </location>
    <ligand>
        <name>acetyl-CoA</name>
        <dbReference type="ChEBI" id="CHEBI:57288"/>
    </ligand>
</feature>
<feature type="binding site" evidence="1">
    <location>
        <begin position="383"/>
        <end position="384"/>
    </location>
    <ligand>
        <name>acetyl-CoA</name>
        <dbReference type="ChEBI" id="CHEBI:57288"/>
    </ligand>
</feature>
<feature type="binding site" evidence="1">
    <location>
        <position position="402"/>
    </location>
    <ligand>
        <name>acetyl-CoA</name>
        <dbReference type="ChEBI" id="CHEBI:57288"/>
    </ligand>
</feature>
<feature type="binding site" evidence="1">
    <location>
        <position position="420"/>
    </location>
    <ligand>
        <name>acetyl-CoA</name>
        <dbReference type="ChEBI" id="CHEBI:57288"/>
    </ligand>
</feature>
<feature type="binding site" evidence="1">
    <location>
        <position position="437"/>
    </location>
    <ligand>
        <name>acetyl-CoA</name>
        <dbReference type="ChEBI" id="CHEBI:57288"/>
    </ligand>
</feature>
<keyword id="KW-0012">Acyltransferase</keyword>
<keyword id="KW-0133">Cell shape</keyword>
<keyword id="KW-0961">Cell wall biogenesis/degradation</keyword>
<keyword id="KW-0963">Cytoplasm</keyword>
<keyword id="KW-0460">Magnesium</keyword>
<keyword id="KW-0479">Metal-binding</keyword>
<keyword id="KW-0511">Multifunctional enzyme</keyword>
<keyword id="KW-0548">Nucleotidyltransferase</keyword>
<keyword id="KW-0573">Peptidoglycan synthesis</keyword>
<keyword id="KW-1185">Reference proteome</keyword>
<keyword id="KW-0677">Repeat</keyword>
<keyword id="KW-0808">Transferase</keyword>
<sequence length="452" mass="48413">MSLSVVILAAGKGTRMCSELPKVLHKIADKPMVQHVIDTVKSIGADSIHLIYGHGGQQLQEKISDGSLNWIKQAEQLGTGHAMQIALPHFKNDEKILMVYGDVPLLSEKTLTDLIAAQPPGGIGLLTVELDNPTGYGRIERMNGEVAGIVEQKDATVAQLSIKEVNTGILVADANDLSRWLPALSNENAAGEYYITDIIKMAHLEGRIISAVQPESATEVEGVNTRLQLANLERAYQLKKATELLLSGVMLRDPNRFDLRGTLTCGVDVEIDINVIIQGNVNLGNGVVIGANCILIDCDIAENAVIQANSIIEGSSIGARATIGPFARIRPQSVLKEEVHVGNFVEIKKSTLGNGTKCGHLSYIGDSTLGQRVNIGAGTITCNYDGVNKFHTHIGDDVFIGSDCQLIAPVTINNGATTGAGSTIMIDVPENALAIGRAKQRNINNWKRPTKK</sequence>
<reference key="1">
    <citation type="journal article" date="2008" name="BMC Genomics">
        <title>Genomics of an extreme psychrophile, Psychromonas ingrahamii.</title>
        <authorList>
            <person name="Riley M."/>
            <person name="Staley J.T."/>
            <person name="Danchin A."/>
            <person name="Wang T.Z."/>
            <person name="Brettin T.S."/>
            <person name="Hauser L.J."/>
            <person name="Land M.L."/>
            <person name="Thompson L.S."/>
        </authorList>
    </citation>
    <scope>NUCLEOTIDE SEQUENCE [LARGE SCALE GENOMIC DNA]</scope>
    <source>
        <strain>DSM 17664 / CCUG 51855 / 37</strain>
    </source>
</reference>
<protein>
    <recommendedName>
        <fullName evidence="1">Bifunctional protein GlmU</fullName>
    </recommendedName>
    <domain>
        <recommendedName>
            <fullName evidence="1">UDP-N-acetylglucosamine pyrophosphorylase</fullName>
            <ecNumber evidence="1">2.7.7.23</ecNumber>
        </recommendedName>
        <alternativeName>
            <fullName evidence="1">N-acetylglucosamine-1-phosphate uridyltransferase</fullName>
        </alternativeName>
    </domain>
    <domain>
        <recommendedName>
            <fullName evidence="1">Glucosamine-1-phosphate N-acetyltransferase</fullName>
            <ecNumber evidence="1">2.3.1.157</ecNumber>
        </recommendedName>
    </domain>
</protein>